<gene>
    <name evidence="1" type="primary">murB</name>
    <name type="ordered locus">HD_0081</name>
</gene>
<name>MURB_HAEDU</name>
<protein>
    <recommendedName>
        <fullName evidence="1">UDP-N-acetylenolpyruvoylglucosamine reductase</fullName>
        <ecNumber evidence="1">1.3.1.98</ecNumber>
    </recommendedName>
    <alternativeName>
        <fullName evidence="1">UDP-N-acetylmuramate dehydrogenase</fullName>
    </alternativeName>
</protein>
<keyword id="KW-0131">Cell cycle</keyword>
<keyword id="KW-0132">Cell division</keyword>
<keyword id="KW-0133">Cell shape</keyword>
<keyword id="KW-0961">Cell wall biogenesis/degradation</keyword>
<keyword id="KW-0963">Cytoplasm</keyword>
<keyword id="KW-0274">FAD</keyword>
<keyword id="KW-0285">Flavoprotein</keyword>
<keyword id="KW-0521">NADP</keyword>
<keyword id="KW-0560">Oxidoreductase</keyword>
<keyword id="KW-0573">Peptidoglycan synthesis</keyword>
<keyword id="KW-1185">Reference proteome</keyword>
<organism>
    <name type="scientific">Haemophilus ducreyi (strain 35000HP / ATCC 700724)</name>
    <dbReference type="NCBI Taxonomy" id="233412"/>
    <lineage>
        <taxon>Bacteria</taxon>
        <taxon>Pseudomonadati</taxon>
        <taxon>Pseudomonadota</taxon>
        <taxon>Gammaproteobacteria</taxon>
        <taxon>Pasteurellales</taxon>
        <taxon>Pasteurellaceae</taxon>
        <taxon>Haemophilus</taxon>
    </lineage>
</organism>
<comment type="function">
    <text evidence="1">Cell wall formation.</text>
</comment>
<comment type="catalytic activity">
    <reaction evidence="1">
        <text>UDP-N-acetyl-alpha-D-muramate + NADP(+) = UDP-N-acetyl-3-O-(1-carboxyvinyl)-alpha-D-glucosamine + NADPH + H(+)</text>
        <dbReference type="Rhea" id="RHEA:12248"/>
        <dbReference type="ChEBI" id="CHEBI:15378"/>
        <dbReference type="ChEBI" id="CHEBI:57783"/>
        <dbReference type="ChEBI" id="CHEBI:58349"/>
        <dbReference type="ChEBI" id="CHEBI:68483"/>
        <dbReference type="ChEBI" id="CHEBI:70757"/>
        <dbReference type="EC" id="1.3.1.98"/>
    </reaction>
</comment>
<comment type="cofactor">
    <cofactor evidence="1">
        <name>FAD</name>
        <dbReference type="ChEBI" id="CHEBI:57692"/>
    </cofactor>
</comment>
<comment type="pathway">
    <text evidence="1">Cell wall biogenesis; peptidoglycan biosynthesis.</text>
</comment>
<comment type="subcellular location">
    <subcellularLocation>
        <location evidence="1">Cytoplasm</location>
    </subcellularLocation>
</comment>
<comment type="similarity">
    <text evidence="1">Belongs to the MurB family.</text>
</comment>
<reference key="1">
    <citation type="submission" date="2003-06" db="EMBL/GenBank/DDBJ databases">
        <title>The complete genome sequence of Haemophilus ducreyi.</title>
        <authorList>
            <person name="Munson R.S. Jr."/>
            <person name="Ray W.C."/>
            <person name="Mahairas G."/>
            <person name="Sabo P."/>
            <person name="Mungur R."/>
            <person name="Johnson L."/>
            <person name="Nguyen D."/>
            <person name="Wang J."/>
            <person name="Forst C."/>
            <person name="Hood L."/>
        </authorList>
    </citation>
    <scope>NUCLEOTIDE SEQUENCE [LARGE SCALE GENOMIC DNA]</scope>
    <source>
        <strain>35000HP / ATCC 700724</strain>
    </source>
</reference>
<proteinExistence type="inferred from homology"/>
<accession>Q7VPJ2</accession>
<feature type="chain" id="PRO_0000179214" description="UDP-N-acetylenolpyruvoylglucosamine reductase">
    <location>
        <begin position="1"/>
        <end position="344"/>
    </location>
</feature>
<feature type="domain" description="FAD-binding PCMH-type" evidence="1">
    <location>
        <begin position="15"/>
        <end position="185"/>
    </location>
</feature>
<feature type="active site" evidence="1">
    <location>
        <position position="161"/>
    </location>
</feature>
<feature type="active site" description="Proton donor" evidence="1">
    <location>
        <position position="231"/>
    </location>
</feature>
<feature type="active site" evidence="1">
    <location>
        <position position="327"/>
    </location>
</feature>
<evidence type="ECO:0000255" key="1">
    <source>
        <dbReference type="HAMAP-Rule" id="MF_00037"/>
    </source>
</evidence>
<dbReference type="EC" id="1.3.1.98" evidence="1"/>
<dbReference type="EMBL" id="AE017143">
    <property type="protein sequence ID" value="AAP95089.1"/>
    <property type="molecule type" value="Genomic_DNA"/>
</dbReference>
<dbReference type="RefSeq" id="WP_010944143.1">
    <property type="nucleotide sequence ID" value="NC_002940.2"/>
</dbReference>
<dbReference type="SMR" id="Q7VPJ2"/>
<dbReference type="STRING" id="233412.HD_0081"/>
<dbReference type="KEGG" id="hdu:HD_0081"/>
<dbReference type="eggNOG" id="COG0812">
    <property type="taxonomic scope" value="Bacteria"/>
</dbReference>
<dbReference type="HOGENOM" id="CLU_035304_0_0_6"/>
<dbReference type="UniPathway" id="UPA00219"/>
<dbReference type="Proteomes" id="UP000001022">
    <property type="component" value="Chromosome"/>
</dbReference>
<dbReference type="GO" id="GO:0005829">
    <property type="term" value="C:cytosol"/>
    <property type="evidence" value="ECO:0007669"/>
    <property type="project" value="TreeGrafter"/>
</dbReference>
<dbReference type="GO" id="GO:0071949">
    <property type="term" value="F:FAD binding"/>
    <property type="evidence" value="ECO:0007669"/>
    <property type="project" value="InterPro"/>
</dbReference>
<dbReference type="GO" id="GO:0008762">
    <property type="term" value="F:UDP-N-acetylmuramate dehydrogenase activity"/>
    <property type="evidence" value="ECO:0007669"/>
    <property type="project" value="UniProtKB-UniRule"/>
</dbReference>
<dbReference type="GO" id="GO:0051301">
    <property type="term" value="P:cell division"/>
    <property type="evidence" value="ECO:0007669"/>
    <property type="project" value="UniProtKB-KW"/>
</dbReference>
<dbReference type="GO" id="GO:0071555">
    <property type="term" value="P:cell wall organization"/>
    <property type="evidence" value="ECO:0007669"/>
    <property type="project" value="UniProtKB-KW"/>
</dbReference>
<dbReference type="GO" id="GO:0009252">
    <property type="term" value="P:peptidoglycan biosynthetic process"/>
    <property type="evidence" value="ECO:0007669"/>
    <property type="project" value="UniProtKB-UniRule"/>
</dbReference>
<dbReference type="GO" id="GO:0008360">
    <property type="term" value="P:regulation of cell shape"/>
    <property type="evidence" value="ECO:0007669"/>
    <property type="project" value="UniProtKB-KW"/>
</dbReference>
<dbReference type="Gene3D" id="3.30.465.10">
    <property type="match status" value="1"/>
</dbReference>
<dbReference type="Gene3D" id="3.90.78.10">
    <property type="entry name" value="UDP-N-acetylenolpyruvoylglucosamine reductase, C-terminal domain"/>
    <property type="match status" value="1"/>
</dbReference>
<dbReference type="Gene3D" id="3.30.43.10">
    <property type="entry name" value="Uridine Diphospho-n-acetylenolpyruvylglucosamine Reductase, domain 2"/>
    <property type="match status" value="1"/>
</dbReference>
<dbReference type="HAMAP" id="MF_00037">
    <property type="entry name" value="MurB"/>
    <property type="match status" value="1"/>
</dbReference>
<dbReference type="InterPro" id="IPR016166">
    <property type="entry name" value="FAD-bd_PCMH"/>
</dbReference>
<dbReference type="InterPro" id="IPR036318">
    <property type="entry name" value="FAD-bd_PCMH-like_sf"/>
</dbReference>
<dbReference type="InterPro" id="IPR016167">
    <property type="entry name" value="FAD-bd_PCMH_sub1"/>
</dbReference>
<dbReference type="InterPro" id="IPR016169">
    <property type="entry name" value="FAD-bd_PCMH_sub2"/>
</dbReference>
<dbReference type="InterPro" id="IPR003170">
    <property type="entry name" value="MurB"/>
</dbReference>
<dbReference type="InterPro" id="IPR011601">
    <property type="entry name" value="MurB_C"/>
</dbReference>
<dbReference type="InterPro" id="IPR036635">
    <property type="entry name" value="MurB_C_sf"/>
</dbReference>
<dbReference type="InterPro" id="IPR006094">
    <property type="entry name" value="Oxid_FAD_bind_N"/>
</dbReference>
<dbReference type="NCBIfam" id="TIGR00179">
    <property type="entry name" value="murB"/>
    <property type="match status" value="1"/>
</dbReference>
<dbReference type="NCBIfam" id="NF000755">
    <property type="entry name" value="PRK00046.1"/>
    <property type="match status" value="1"/>
</dbReference>
<dbReference type="PANTHER" id="PTHR21071">
    <property type="entry name" value="UDP-N-ACETYLENOLPYRUVOYLGLUCOSAMINE REDUCTASE"/>
    <property type="match status" value="1"/>
</dbReference>
<dbReference type="PANTHER" id="PTHR21071:SF4">
    <property type="entry name" value="UDP-N-ACETYLENOLPYRUVOYLGLUCOSAMINE REDUCTASE"/>
    <property type="match status" value="1"/>
</dbReference>
<dbReference type="Pfam" id="PF01565">
    <property type="entry name" value="FAD_binding_4"/>
    <property type="match status" value="1"/>
</dbReference>
<dbReference type="Pfam" id="PF02873">
    <property type="entry name" value="MurB_C"/>
    <property type="match status" value="1"/>
</dbReference>
<dbReference type="SUPFAM" id="SSF56176">
    <property type="entry name" value="FAD-binding/transporter-associated domain-like"/>
    <property type="match status" value="1"/>
</dbReference>
<dbReference type="SUPFAM" id="SSF56194">
    <property type="entry name" value="Uridine diphospho-N-Acetylenolpyruvylglucosamine reductase, MurB, C-terminal domain"/>
    <property type="match status" value="1"/>
</dbReference>
<dbReference type="PROSITE" id="PS51387">
    <property type="entry name" value="FAD_PCMH"/>
    <property type="match status" value="1"/>
</dbReference>
<sequence length="344" mass="38490">MIMNHSLLPFHTFHLPACANQIIEFTTVSQLITEWQKATRADQAVLILGQGSNVLFLDDFNGVVLVNKLKGIQHREDHDYHYIQAQGGENWHNLVEWTLAKNIAGLENLALIPGVVGSAPIQNIGAYGVEFEQFCDFVEVVNLANGQIFRLDKQACQFGYRDSVFKHQYRHSFAIISVGLKLAKAWTPTLNYGSLVKFSADTVTSQQIFDEVCAIRSSKLPDPDEYGNAGSFFKNPIIDATTFAEIQTAFPQIPYYPQPDGNIKLAAGWLIDQCELKGFQIGGAAVHTQQALVLINKAHATGRQVVELAQQVRRRVRHKFNVELHPEVRFIGQTGEVDSEEITR</sequence>